<evidence type="ECO:0000250" key="1">
    <source>
        <dbReference type="UniProtKB" id="B1P1E1"/>
    </source>
</evidence>
<evidence type="ECO:0000255" key="2"/>
<evidence type="ECO:0000269" key="3">
    <source>
    </source>
</evidence>
<evidence type="ECO:0000269" key="4">
    <source>
    </source>
</evidence>
<evidence type="ECO:0000303" key="5">
    <source>
    </source>
</evidence>
<evidence type="ECO:0000303" key="6">
    <source>
    </source>
</evidence>
<evidence type="ECO:0000305" key="7"/>
<evidence type="ECO:0000305" key="8">
    <source>
    </source>
</evidence>
<evidence type="ECO:0000305" key="9">
    <source>
    </source>
</evidence>
<evidence type="ECO:0000312" key="10">
    <source>
        <dbReference type="EMBL" id="ABY71704.1"/>
    </source>
</evidence>
<accession>B1P1F4</accession>
<proteinExistence type="evidence at protein level"/>
<name>JZ31A_CHIGU</name>
<feature type="signal peptide" evidence="2">
    <location>
        <begin position="1"/>
        <end position="21"/>
    </location>
</feature>
<feature type="propeptide" id="PRO_0000398461" evidence="3 4">
    <location>
        <begin position="22"/>
        <end position="50"/>
    </location>
</feature>
<feature type="peptide" id="PRO_0000398462" description="Mu-theraphotoxin-Cg2a 1" evidence="3 4">
    <location>
        <begin position="51"/>
        <end position="84"/>
    </location>
</feature>
<feature type="modified residue" description="Phenylalanine amide" evidence="3 4">
    <location>
        <position position="84"/>
    </location>
</feature>
<feature type="disulfide bond" evidence="1">
    <location>
        <begin position="52"/>
        <end position="66"/>
    </location>
</feature>
<feature type="disulfide bond" evidence="1">
    <location>
        <begin position="59"/>
        <end position="71"/>
    </location>
</feature>
<feature type="disulfide bond" evidence="1">
    <location>
        <begin position="65"/>
        <end position="78"/>
    </location>
</feature>
<dbReference type="EMBL" id="EU233885">
    <property type="protein sequence ID" value="ABY71704.1"/>
    <property type="molecule type" value="mRNA"/>
</dbReference>
<dbReference type="SMR" id="B1P1F4"/>
<dbReference type="ArachnoServer" id="AS000832">
    <property type="toxin name" value="delta-theraphotoxin-Cg2a"/>
</dbReference>
<dbReference type="GO" id="GO:0005576">
    <property type="term" value="C:extracellular region"/>
    <property type="evidence" value="ECO:0007669"/>
    <property type="project" value="UniProtKB-SubCell"/>
</dbReference>
<dbReference type="GO" id="GO:0008200">
    <property type="term" value="F:ion channel inhibitor activity"/>
    <property type="evidence" value="ECO:0007669"/>
    <property type="project" value="InterPro"/>
</dbReference>
<dbReference type="GO" id="GO:0017080">
    <property type="term" value="F:sodium channel regulator activity"/>
    <property type="evidence" value="ECO:0007669"/>
    <property type="project" value="UniProtKB-KW"/>
</dbReference>
<dbReference type="GO" id="GO:0090729">
    <property type="term" value="F:toxin activity"/>
    <property type="evidence" value="ECO:0007669"/>
    <property type="project" value="UniProtKB-KW"/>
</dbReference>
<dbReference type="InterPro" id="IPR011696">
    <property type="entry name" value="Huwentoxin-1"/>
</dbReference>
<dbReference type="Pfam" id="PF07740">
    <property type="entry name" value="Toxin_12"/>
    <property type="match status" value="1"/>
</dbReference>
<dbReference type="SUPFAM" id="SSF57059">
    <property type="entry name" value="omega toxin-like"/>
    <property type="match status" value="1"/>
</dbReference>
<protein>
    <recommendedName>
        <fullName evidence="7">Mu-theraphotoxin-Cg2a 1</fullName>
        <shortName evidence="7">Mu-TRTX-Cg2a</shortName>
    </recommendedName>
    <alternativeName>
        <fullName evidence="7">Jingzhaotoxin-31</fullName>
        <shortName evidence="10">JZTX-31</shortName>
    </alternativeName>
    <alternativeName>
        <fullName evidence="6">Jingzhaotoxin-IV</fullName>
        <shortName evidence="6">JZTX-IV</shortName>
    </alternativeName>
    <alternativeName>
        <fullName evidence="5">Peptide F1-23.73</fullName>
    </alternativeName>
</protein>
<reference key="1">
    <citation type="journal article" date="2008" name="Toxicon">
        <title>JZTX-IV, a unique acidic sodium channel toxin isolated from the spider Chilobrachys jingzhao.</title>
        <authorList>
            <person name="Wang M."/>
            <person name="Diao J."/>
            <person name="Li J."/>
            <person name="Tang J."/>
            <person name="Lin Y."/>
            <person name="Hu W."/>
            <person name="Zhang Y."/>
            <person name="Xiao Y."/>
            <person name="Liang S."/>
        </authorList>
    </citation>
    <scope>NUCLEOTIDE SEQUENCE [MRNA]</scope>
    <scope>PROTEIN SEQUENCE OF 51-84</scope>
    <scope>AMIDATION AT PHE-84</scope>
    <scope>FUNCTION</scope>
    <scope>MASS SPECTROMETRY</scope>
    <scope>SUBCELLULAR LOCATION</scope>
    <source>
        <tissue>Venom</tissue>
        <tissue>Venom gland</tissue>
    </source>
</reference>
<reference key="2">
    <citation type="journal article" date="2008" name="Cell. Mol. Life Sci.">
        <title>Molecular diversity and evolution of cystine knot toxins of the tarantula Chilobrachys jingzhao.</title>
        <authorList>
            <person name="Chen J."/>
            <person name="Deng M."/>
            <person name="He Q."/>
            <person name="Meng E."/>
            <person name="Jiang L."/>
            <person name="Liao Z."/>
            <person name="Rong M."/>
            <person name="Liang S."/>
        </authorList>
    </citation>
    <scope>NUCLEOTIDE SEQUENCE [LARGE SCALE MRNA]</scope>
    <source>
        <tissue>Venom gland</tissue>
    </source>
</reference>
<reference key="3">
    <citation type="journal article" date="2007" name="Proteomics">
        <title>Proteomic and peptidomic analysis of the venom from Chinese tarantula Chilobrachys jingzhao.</title>
        <authorList>
            <person name="Liao Z."/>
            <person name="Cao J."/>
            <person name="Li S."/>
            <person name="Yan X."/>
            <person name="Hu W."/>
            <person name="He Q."/>
            <person name="Chen J."/>
            <person name="Tang J."/>
            <person name="Xie J."/>
            <person name="Liang S."/>
        </authorList>
    </citation>
    <scope>PROTEIN SEQUENCE OF 51-84</scope>
    <scope>MASS SPECTROMETRY</scope>
    <scope>AMIDATION AT PHE-84</scope>
    <scope>SUBCELLULAR LOCATION</scope>
    <source>
        <tissue>Venom</tissue>
    </source>
</reference>
<organism>
    <name type="scientific">Chilobrachys guangxiensis</name>
    <name type="common">Chinese earth tiger tarantula</name>
    <name type="synonym">Chilobrachys jingzhao</name>
    <dbReference type="NCBI Taxonomy" id="278060"/>
    <lineage>
        <taxon>Eukaryota</taxon>
        <taxon>Metazoa</taxon>
        <taxon>Ecdysozoa</taxon>
        <taxon>Arthropoda</taxon>
        <taxon>Chelicerata</taxon>
        <taxon>Arachnida</taxon>
        <taxon>Araneae</taxon>
        <taxon>Mygalomorphae</taxon>
        <taxon>Theraphosidae</taxon>
        <taxon>Chilobrachys</taxon>
    </lineage>
</organism>
<sequence length="86" mass="9647">MKVSVVITLAVLGIMFVWASAAELEERGSDQRDSPAWLKSMERIFQSEERECTKFLGGCSEDSECCPHLGCKDVLYYCAWDGTFGK</sequence>
<keyword id="KW-0027">Amidation</keyword>
<keyword id="KW-0903">Direct protein sequencing</keyword>
<keyword id="KW-1015">Disulfide bond</keyword>
<keyword id="KW-0872">Ion channel impairing toxin</keyword>
<keyword id="KW-0960">Knottin</keyword>
<keyword id="KW-0964">Secreted</keyword>
<keyword id="KW-0732">Signal</keyword>
<keyword id="KW-0800">Toxin</keyword>
<keyword id="KW-0738">Voltage-gated sodium channel impairing toxin</keyword>
<comment type="function">
    <text evidence="4">Inhibits both peak current and fast inactivation of voltage-gated sodium channels (Nav) channels. Inhibits the inactivation of Nav on DRG neurons (EC(50)=1.77 uM) and peak current of cardiac myocytes (IC(50)=0.90 uM).</text>
</comment>
<comment type="subcellular location">
    <subcellularLocation>
        <location evidence="3 4">Secreted</location>
    </subcellularLocation>
</comment>
<comment type="tissue specificity">
    <text evidence="8 9">Expressed by the venom gland.</text>
</comment>
<comment type="domain">
    <text evidence="1">The presence of a 'disulfide through disulfide knot' structurally defines this protein as a knottin.</text>
</comment>
<comment type="mass spectrometry" mass="3774.88" method="MALDI" evidence="3 4">
    <text>Monoisotopic mass.</text>
</comment>
<comment type="similarity">
    <text evidence="7">Belongs to the neurotoxin 10 (Hwtx-1) family. 37 (Jztx-31) subfamily.</text>
</comment>